<feature type="initiator methionine" description="Removed" evidence="4">
    <location>
        <position position="1"/>
    </location>
</feature>
<feature type="chain" id="PRO_0000195203" description="Inositol-3-phosphate synthase">
    <location>
        <begin position="2"/>
        <end position="367"/>
    </location>
</feature>
<feature type="binding site" evidence="1">
    <location>
        <position position="78"/>
    </location>
    <ligand>
        <name>NAD(+)</name>
        <dbReference type="ChEBI" id="CHEBI:57540"/>
    </ligand>
</feature>
<feature type="binding site" evidence="1">
    <location>
        <position position="137"/>
    </location>
    <ligand>
        <name>NAD(+)</name>
        <dbReference type="ChEBI" id="CHEBI:57540"/>
    </ligand>
</feature>
<feature type="binding site" evidence="1">
    <location>
        <position position="157"/>
    </location>
    <ligand>
        <name>NAD(+)</name>
        <dbReference type="ChEBI" id="CHEBI:57540"/>
    </ligand>
</feature>
<feature type="binding site" evidence="1">
    <location>
        <position position="200"/>
    </location>
    <ligand>
        <name>NAD(+)</name>
        <dbReference type="ChEBI" id="CHEBI:57540"/>
    </ligand>
</feature>
<feature type="binding site" evidence="1">
    <location>
        <position position="235"/>
    </location>
    <ligand>
        <name>NAD(+)</name>
        <dbReference type="ChEBI" id="CHEBI:57540"/>
    </ligand>
</feature>
<feature type="binding site" evidence="1">
    <location>
        <position position="248"/>
    </location>
    <ligand>
        <name>NAD(+)</name>
        <dbReference type="ChEBI" id="CHEBI:57540"/>
    </ligand>
</feature>
<feature type="modified residue" description="N-acetylserine" evidence="4">
    <location>
        <position position="2"/>
    </location>
</feature>
<feature type="cross-link" description="Isoglutamyl lysine isopeptide (Lys-Gln) (interchain with Q-Cter in protein Pup)" evidence="2">
    <location>
        <position position="73"/>
    </location>
</feature>
<feature type="strand" evidence="5">
    <location>
        <begin position="16"/>
        <end position="21"/>
    </location>
</feature>
<feature type="helix" evidence="5">
    <location>
        <begin position="25"/>
        <end position="36"/>
    </location>
</feature>
<feature type="turn" evidence="5">
    <location>
        <begin position="37"/>
        <end position="39"/>
    </location>
</feature>
<feature type="strand" evidence="5">
    <location>
        <begin position="52"/>
        <end position="54"/>
    </location>
</feature>
<feature type="helix" evidence="5">
    <location>
        <begin position="59"/>
        <end position="61"/>
    </location>
</feature>
<feature type="strand" evidence="5">
    <location>
        <begin position="62"/>
        <end position="69"/>
    </location>
</feature>
<feature type="turn" evidence="5">
    <location>
        <begin position="72"/>
        <end position="76"/>
    </location>
</feature>
<feature type="helix" evidence="5">
    <location>
        <begin position="79"/>
        <end position="82"/>
    </location>
</feature>
<feature type="helix" evidence="5">
    <location>
        <begin position="114"/>
        <end position="117"/>
    </location>
</feature>
<feature type="helix" evidence="5">
    <location>
        <begin position="130"/>
        <end position="136"/>
    </location>
</feature>
<feature type="strand" evidence="5">
    <location>
        <begin position="140"/>
        <end position="144"/>
    </location>
</feature>
<feature type="helix" evidence="5">
    <location>
        <begin position="151"/>
        <end position="164"/>
    </location>
</feature>
<feature type="strand" evidence="5">
    <location>
        <begin position="167"/>
        <end position="170"/>
    </location>
</feature>
<feature type="helix" evidence="5">
    <location>
        <begin position="180"/>
        <end position="189"/>
    </location>
</feature>
<feature type="strand" evidence="5">
    <location>
        <begin position="192"/>
        <end position="198"/>
    </location>
</feature>
<feature type="helix" evidence="5">
    <location>
        <begin position="204"/>
        <end position="217"/>
    </location>
</feature>
<feature type="strand" evidence="5">
    <location>
        <begin position="221"/>
        <end position="231"/>
    </location>
</feature>
<feature type="helix" evidence="5">
    <location>
        <begin position="234"/>
        <end position="240"/>
    </location>
</feature>
<feature type="strand" evidence="5">
    <location>
        <begin position="272"/>
        <end position="276"/>
    </location>
</feature>
<feature type="helix" evidence="5">
    <location>
        <begin position="278"/>
        <end position="280"/>
    </location>
</feature>
<feature type="strand" evidence="5">
    <location>
        <begin position="283"/>
        <end position="294"/>
    </location>
</feature>
<feature type="helix" evidence="5">
    <location>
        <begin position="295"/>
        <end position="297"/>
    </location>
</feature>
<feature type="strand" evidence="5">
    <location>
        <begin position="298"/>
        <end position="309"/>
    </location>
</feature>
<feature type="helix" evidence="5">
    <location>
        <begin position="312"/>
        <end position="330"/>
    </location>
</feature>
<feature type="helix" evidence="5">
    <location>
        <begin position="338"/>
        <end position="344"/>
    </location>
</feature>
<feature type="strand" evidence="5">
    <location>
        <begin position="345"/>
        <end position="347"/>
    </location>
</feature>
<feature type="helix" evidence="5">
    <location>
        <begin position="354"/>
        <end position="366"/>
    </location>
</feature>
<proteinExistence type="evidence at protein level"/>
<sequence>MSEHQSLPAPEASTEVRVAIVGVGNCASSLVQGVEYYYNADDTSTVPGLMHVRFGPYHVRDVKFVAAFDVDAKKVGFDLSDAIFASENNTIKIADVAPTNVIVQRGPTLDGIGKYYADTIELSDAEPVDVVQALKEAKVDVLVSYLPVGSEEADKFYAQCAIDAGVAFVNALPVFIASDPVWAKKFTDARVPIVGDDIKSQVGATITHRVLAKLFEDRGVQLDRTMQLNVGGNMDFLNMLERERLESKKISKTQAVTSNLKREFKTKDVHIGPSDHVGWLDDRKWAYVRLEGRAFGDVPLNLEYKLEVWDSPNSAGVIIDAVRAAKIAKDRGIGGPVIPASAYLMKSPPEQLPDDIARAQLEEFIIG</sequence>
<dbReference type="EC" id="5.5.1.4" evidence="1"/>
<dbReference type="EMBL" id="AL123456">
    <property type="protein sequence ID" value="CCP42768.1"/>
    <property type="molecule type" value="Genomic_DNA"/>
</dbReference>
<dbReference type="PIR" id="F70912">
    <property type="entry name" value="F70912"/>
</dbReference>
<dbReference type="RefSeq" id="NP_214560.1">
    <property type="nucleotide sequence ID" value="NC_000962.3"/>
</dbReference>
<dbReference type="RefSeq" id="WP_003902822.1">
    <property type="nucleotide sequence ID" value="NZ_NVQJ01000005.1"/>
</dbReference>
<dbReference type="PDB" id="1GR0">
    <property type="method" value="X-ray"/>
    <property type="resolution" value="1.95 A"/>
    <property type="chains" value="A=1-367"/>
</dbReference>
<dbReference type="PDBsum" id="1GR0"/>
<dbReference type="SMR" id="P9WKI1"/>
<dbReference type="FunCoup" id="P9WKI1">
    <property type="interactions" value="8"/>
</dbReference>
<dbReference type="STRING" id="83332.Rv0046c"/>
<dbReference type="iPTMnet" id="P9WKI1"/>
<dbReference type="PaxDb" id="83332-Rv0046c"/>
<dbReference type="DNASU" id="887028"/>
<dbReference type="GeneID" id="887028"/>
<dbReference type="KEGG" id="mtu:Rv0046c"/>
<dbReference type="KEGG" id="mtv:RVBD_0046c"/>
<dbReference type="TubercuList" id="Rv0046c"/>
<dbReference type="eggNOG" id="COG1260">
    <property type="taxonomic scope" value="Bacteria"/>
</dbReference>
<dbReference type="InParanoid" id="P9WKI1"/>
<dbReference type="OrthoDB" id="9766811at2"/>
<dbReference type="PhylomeDB" id="P9WKI1"/>
<dbReference type="BioCyc" id="MetaCyc:G185E-4160-MONOMER"/>
<dbReference type="Reactome" id="R-MTU-879299">
    <property type="pathway name" value="Mycothiol biosynthesis"/>
</dbReference>
<dbReference type="EvolutionaryTrace" id="P9WKI1"/>
<dbReference type="Proteomes" id="UP000001584">
    <property type="component" value="Chromosome"/>
</dbReference>
<dbReference type="GO" id="GO:0005829">
    <property type="term" value="C:cytosol"/>
    <property type="evidence" value="ECO:0000304"/>
    <property type="project" value="Reactome"/>
</dbReference>
<dbReference type="GO" id="GO:0004512">
    <property type="term" value="F:inositol-3-phosphate synthase activity"/>
    <property type="evidence" value="ECO:0000315"/>
    <property type="project" value="MTBBASE"/>
</dbReference>
<dbReference type="GO" id="GO:0008270">
    <property type="term" value="F:zinc ion binding"/>
    <property type="evidence" value="ECO:0000314"/>
    <property type="project" value="MTBBASE"/>
</dbReference>
<dbReference type="GO" id="GO:0006021">
    <property type="term" value="P:inositol biosynthetic process"/>
    <property type="evidence" value="ECO:0000315"/>
    <property type="project" value="MTBBASE"/>
</dbReference>
<dbReference type="GO" id="GO:0008654">
    <property type="term" value="P:phospholipid biosynthetic process"/>
    <property type="evidence" value="ECO:0007669"/>
    <property type="project" value="InterPro"/>
</dbReference>
<dbReference type="Gene3D" id="3.30.360.10">
    <property type="entry name" value="Dihydrodipicolinate Reductase, domain 2"/>
    <property type="match status" value="1"/>
</dbReference>
<dbReference type="Gene3D" id="3.40.50.720">
    <property type="entry name" value="NAD(P)-binding Rossmann-like Domain"/>
    <property type="match status" value="1"/>
</dbReference>
<dbReference type="InterPro" id="IPR052199">
    <property type="entry name" value="MIPS"/>
</dbReference>
<dbReference type="InterPro" id="IPR002587">
    <property type="entry name" value="Myo-inos-1-P_Synthase"/>
</dbReference>
<dbReference type="InterPro" id="IPR017815">
    <property type="entry name" value="Myo-inos-1-P_Synthase_actino"/>
</dbReference>
<dbReference type="InterPro" id="IPR013021">
    <property type="entry name" value="Myo-inos-1-P_Synthase_GAPDH"/>
</dbReference>
<dbReference type="InterPro" id="IPR036291">
    <property type="entry name" value="NAD(P)-bd_dom_sf"/>
</dbReference>
<dbReference type="NCBIfam" id="TIGR03450">
    <property type="entry name" value="mycothiol_INO1"/>
    <property type="match status" value="1"/>
</dbReference>
<dbReference type="PANTHER" id="PTHR43125">
    <property type="entry name" value="INOSITOL-3-PHOSPHATE SYNTHASE"/>
    <property type="match status" value="1"/>
</dbReference>
<dbReference type="PANTHER" id="PTHR43125:SF1">
    <property type="entry name" value="INOSITOL-3-PHOSPHATE SYNTHASE"/>
    <property type="match status" value="1"/>
</dbReference>
<dbReference type="Pfam" id="PF01658">
    <property type="entry name" value="Inos-1-P_synth"/>
    <property type="match status" value="1"/>
</dbReference>
<dbReference type="PIRSF" id="PIRSF015578">
    <property type="entry name" value="Myoinos-ppht_syn"/>
    <property type="match status" value="1"/>
</dbReference>
<dbReference type="SUPFAM" id="SSF55347">
    <property type="entry name" value="Glyceraldehyde-3-phosphate dehydrogenase-like, C-terminal domain"/>
    <property type="match status" value="1"/>
</dbReference>
<dbReference type="SUPFAM" id="SSF51735">
    <property type="entry name" value="NAD(P)-binding Rossmann-fold domains"/>
    <property type="match status" value="1"/>
</dbReference>
<protein>
    <recommendedName>
        <fullName>Inositol-3-phosphate synthase</fullName>
        <shortName>IPS</shortName>
        <ecNumber evidence="1">5.5.1.4</ecNumber>
    </recommendedName>
    <alternativeName>
        <fullName>Myo-inositol 1-phosphate synthase</fullName>
        <shortName>MI-1-P synthase</shortName>
        <shortName>MIP synthase</shortName>
    </alternativeName>
</protein>
<organism>
    <name type="scientific">Mycobacterium tuberculosis (strain ATCC 25618 / H37Rv)</name>
    <dbReference type="NCBI Taxonomy" id="83332"/>
    <lineage>
        <taxon>Bacteria</taxon>
        <taxon>Bacillati</taxon>
        <taxon>Actinomycetota</taxon>
        <taxon>Actinomycetes</taxon>
        <taxon>Mycobacteriales</taxon>
        <taxon>Mycobacteriaceae</taxon>
        <taxon>Mycobacterium</taxon>
        <taxon>Mycobacterium tuberculosis complex</taxon>
    </lineage>
</organism>
<reference key="1">
    <citation type="journal article" date="1998" name="Nature">
        <title>Deciphering the biology of Mycobacterium tuberculosis from the complete genome sequence.</title>
        <authorList>
            <person name="Cole S.T."/>
            <person name="Brosch R."/>
            <person name="Parkhill J."/>
            <person name="Garnier T."/>
            <person name="Churcher C.M."/>
            <person name="Harris D.E."/>
            <person name="Gordon S.V."/>
            <person name="Eiglmeier K."/>
            <person name="Gas S."/>
            <person name="Barry C.E. III"/>
            <person name="Tekaia F."/>
            <person name="Badcock K."/>
            <person name="Basham D."/>
            <person name="Brown D."/>
            <person name="Chillingworth T."/>
            <person name="Connor R."/>
            <person name="Davies R.M."/>
            <person name="Devlin K."/>
            <person name="Feltwell T."/>
            <person name="Gentles S."/>
            <person name="Hamlin N."/>
            <person name="Holroyd S."/>
            <person name="Hornsby T."/>
            <person name="Jagels K."/>
            <person name="Krogh A."/>
            <person name="McLean J."/>
            <person name="Moule S."/>
            <person name="Murphy L.D."/>
            <person name="Oliver S."/>
            <person name="Osborne J."/>
            <person name="Quail M.A."/>
            <person name="Rajandream M.A."/>
            <person name="Rogers J."/>
            <person name="Rutter S."/>
            <person name="Seeger K."/>
            <person name="Skelton S."/>
            <person name="Squares S."/>
            <person name="Squares R."/>
            <person name="Sulston J.E."/>
            <person name="Taylor K."/>
            <person name="Whitehead S."/>
            <person name="Barrell B.G."/>
        </authorList>
    </citation>
    <scope>NUCLEOTIDE SEQUENCE [LARGE SCALE GENOMIC DNA]</scope>
    <source>
        <strain>ATCC 25618 / H37Rv</strain>
    </source>
</reference>
<reference key="2">
    <citation type="journal article" date="2010" name="PLoS ONE">
        <title>Prokaryotic ubiquitin-like protein (Pup) proteome of Mycobacterium tuberculosis.</title>
        <authorList>
            <person name="Festa R.A."/>
            <person name="McAllister F."/>
            <person name="Pearce M.J."/>
            <person name="Mintseris J."/>
            <person name="Burns K.E."/>
            <person name="Gygi S.P."/>
            <person name="Darwin K.H."/>
        </authorList>
    </citation>
    <scope>PROTEASOME SUBSTRATE</scope>
    <scope>PUPYLATION AT LYS-73</scope>
    <scope>IDENTIFICATION BY MASS SPECTROMETRY</scope>
    <source>
        <strain>ATCC 25618 / H37Rv</strain>
    </source>
</reference>
<reference key="3">
    <citation type="journal article" date="2011" name="Mol. Cell. Proteomics">
        <title>Proteogenomic analysis of Mycobacterium tuberculosis by high resolution mass spectrometry.</title>
        <authorList>
            <person name="Kelkar D.S."/>
            <person name="Kumar D."/>
            <person name="Kumar P."/>
            <person name="Balakrishnan L."/>
            <person name="Muthusamy B."/>
            <person name="Yadav A.K."/>
            <person name="Shrivastava P."/>
            <person name="Marimuthu A."/>
            <person name="Anand S."/>
            <person name="Sundaram H."/>
            <person name="Kingsbury R."/>
            <person name="Harsha H.C."/>
            <person name="Nair B."/>
            <person name="Prasad T.S."/>
            <person name="Chauhan D.S."/>
            <person name="Katoch K."/>
            <person name="Katoch V.M."/>
            <person name="Kumar P."/>
            <person name="Chaerkady R."/>
            <person name="Ramachandran S."/>
            <person name="Dash D."/>
            <person name="Pandey A."/>
        </authorList>
    </citation>
    <scope>ACETYLATION [LARGE SCALE ANALYSIS] AT SER-2</scope>
    <scope>CLEAVAGE OF INITIATOR METHIONINE [LARGE SCALE ANALYSIS]</scope>
    <scope>IDENTIFICATION BY MASS SPECTROMETRY [LARGE SCALE ANALYSIS]</scope>
    <source>
        <strain>ATCC 25618 / H37Rv</strain>
    </source>
</reference>
<evidence type="ECO:0000250" key="1">
    <source>
        <dbReference type="UniProtKB" id="Q8A7J8"/>
    </source>
</evidence>
<evidence type="ECO:0000269" key="2">
    <source>
    </source>
</evidence>
<evidence type="ECO:0000305" key="3"/>
<evidence type="ECO:0007744" key="4">
    <source>
    </source>
</evidence>
<evidence type="ECO:0007829" key="5">
    <source>
        <dbReference type="PDB" id="1GR0"/>
    </source>
</evidence>
<accession>P9WKI1</accession>
<accession>L0T457</accession>
<accession>P71703</accession>
<keyword id="KW-0002">3D-structure</keyword>
<keyword id="KW-0007">Acetylation</keyword>
<keyword id="KW-0398">Inositol biosynthesis</keyword>
<keyword id="KW-0413">Isomerase</keyword>
<keyword id="KW-1017">Isopeptide bond</keyword>
<keyword id="KW-0520">NAD</keyword>
<keyword id="KW-1185">Reference proteome</keyword>
<keyword id="KW-0832">Ubl conjugation</keyword>
<comment type="function">
    <text evidence="1">Key enzyme in myo-inositol biosynthesis pathway that catalyzes the conversion of glucose 6-phosphate to 1D-myo-inositol 3-phosphate in a NAD-dependent manner.</text>
</comment>
<comment type="catalytic activity">
    <reaction evidence="1">
        <text>D-glucose 6-phosphate = 1D-myo-inositol 3-phosphate</text>
        <dbReference type="Rhea" id="RHEA:10716"/>
        <dbReference type="ChEBI" id="CHEBI:58401"/>
        <dbReference type="ChEBI" id="CHEBI:61548"/>
        <dbReference type="EC" id="5.5.1.4"/>
    </reaction>
</comment>
<comment type="cofactor">
    <cofactor evidence="1">
        <name>NAD(+)</name>
        <dbReference type="ChEBI" id="CHEBI:57540"/>
    </cofactor>
</comment>
<comment type="PTM">
    <text evidence="2">Pupylated at Lys-73 by the prokaryotic ubiquitin-like protein Pup, which leads to its degradation by the proteasome.</text>
</comment>
<comment type="miscellaneous">
    <text>Was identified as a natural substrate of the M.tuberculosis proteasome.</text>
</comment>
<comment type="similarity">
    <text evidence="3">Belongs to the myo-inositol 1-phosphate synthase family.</text>
</comment>
<gene>
    <name type="primary">ino1</name>
    <name type="ordered locus">Rv0046c</name>
    <name type="ORF">MTCY21D4.09c</name>
</gene>
<name>INO1_MYCTU</name>